<gene>
    <name type="primary">lst-2</name>
    <name type="ORF">R160.7</name>
</gene>
<feature type="chain" id="PRO_0000378957" description="Lateral signaling target protein 2">
    <location>
        <begin position="1"/>
        <end position="661"/>
    </location>
</feature>
<feature type="zinc finger region" description="FYVE-type" evidence="2">
    <location>
        <begin position="566"/>
        <end position="626"/>
    </location>
</feature>
<feature type="region of interest" description="Disordered" evidence="3">
    <location>
        <begin position="294"/>
        <end position="432"/>
    </location>
</feature>
<feature type="region of interest" description="Disordered" evidence="3">
    <location>
        <begin position="641"/>
        <end position="661"/>
    </location>
</feature>
<feature type="compositionally biased region" description="Polar residues" evidence="3">
    <location>
        <begin position="297"/>
        <end position="310"/>
    </location>
</feature>
<feature type="compositionally biased region" description="Low complexity" evidence="3">
    <location>
        <begin position="330"/>
        <end position="360"/>
    </location>
</feature>
<feature type="compositionally biased region" description="Low complexity" evidence="3">
    <location>
        <begin position="381"/>
        <end position="393"/>
    </location>
</feature>
<feature type="compositionally biased region" description="Acidic residues" evidence="3">
    <location>
        <begin position="394"/>
        <end position="411"/>
    </location>
</feature>
<feature type="compositionally biased region" description="Basic and acidic residues" evidence="3">
    <location>
        <begin position="412"/>
        <end position="422"/>
    </location>
</feature>
<feature type="compositionally biased region" description="Polar residues" evidence="3">
    <location>
        <begin position="641"/>
        <end position="650"/>
    </location>
</feature>
<feature type="compositionally biased region" description="Low complexity" evidence="3">
    <location>
        <begin position="651"/>
        <end position="661"/>
    </location>
</feature>
<feature type="binding site" evidence="2">
    <location>
        <position position="572"/>
    </location>
    <ligand>
        <name>Zn(2+)</name>
        <dbReference type="ChEBI" id="CHEBI:29105"/>
        <label>1</label>
    </ligand>
</feature>
<feature type="binding site" evidence="2">
    <location>
        <position position="575"/>
    </location>
    <ligand>
        <name>Zn(2+)</name>
        <dbReference type="ChEBI" id="CHEBI:29105"/>
        <label>1</label>
    </ligand>
</feature>
<feature type="binding site" evidence="2">
    <location>
        <position position="588"/>
    </location>
    <ligand>
        <name>Zn(2+)</name>
        <dbReference type="ChEBI" id="CHEBI:29105"/>
        <label>2</label>
    </ligand>
</feature>
<feature type="binding site" evidence="2">
    <location>
        <position position="591"/>
    </location>
    <ligand>
        <name>Zn(2+)</name>
        <dbReference type="ChEBI" id="CHEBI:29105"/>
        <label>2</label>
    </ligand>
</feature>
<feature type="binding site" evidence="2">
    <location>
        <position position="596"/>
    </location>
    <ligand>
        <name>Zn(2+)</name>
        <dbReference type="ChEBI" id="CHEBI:29105"/>
        <label>1</label>
    </ligand>
</feature>
<feature type="binding site" evidence="2">
    <location>
        <position position="599"/>
    </location>
    <ligand>
        <name>Zn(2+)</name>
        <dbReference type="ChEBI" id="CHEBI:29105"/>
        <label>1</label>
    </ligand>
</feature>
<feature type="binding site" evidence="2">
    <location>
        <position position="618"/>
    </location>
    <ligand>
        <name>Zn(2+)</name>
        <dbReference type="ChEBI" id="CHEBI:29105"/>
        <label>2</label>
    </ligand>
</feature>
<feature type="binding site" evidence="2">
    <location>
        <position position="621"/>
    </location>
    <ligand>
        <name>Zn(2+)</name>
        <dbReference type="ChEBI" id="CHEBI:29105"/>
        <label>2</label>
    </ligand>
</feature>
<accession>Q9TZD0</accession>
<reference key="1">
    <citation type="journal article" date="1998" name="Science">
        <title>Genome sequence of the nematode C. elegans: a platform for investigating biology.</title>
        <authorList>
            <consortium name="The C. elegans sequencing consortium"/>
        </authorList>
    </citation>
    <scope>NUCLEOTIDE SEQUENCE [LARGE SCALE GENOMIC DNA]</scope>
    <source>
        <strain>Bristol N2</strain>
    </source>
</reference>
<reference key="2">
    <citation type="journal article" date="2004" name="Science">
        <title>Crosstalk between the EGFR and LIN-12/Notch pathways in C. elegans vulval development.</title>
        <authorList>
            <person name="Yoo A.S."/>
            <person name="Bais C."/>
            <person name="Greenwald I."/>
        </authorList>
    </citation>
    <scope>FUNCTION</scope>
    <scope>TISSUE SPECIFICITY</scope>
    <scope>DEVELOPMENTAL STAGE</scope>
    <scope>DISRUPTION PHENOTYPE</scope>
</reference>
<organism>
    <name type="scientific">Caenorhabditis elegans</name>
    <dbReference type="NCBI Taxonomy" id="6239"/>
    <lineage>
        <taxon>Eukaryota</taxon>
        <taxon>Metazoa</taxon>
        <taxon>Ecdysozoa</taxon>
        <taxon>Nematoda</taxon>
        <taxon>Chromadorea</taxon>
        <taxon>Rhabditida</taxon>
        <taxon>Rhabditina</taxon>
        <taxon>Rhabditomorpha</taxon>
        <taxon>Rhabditoidea</taxon>
        <taxon>Rhabditidae</taxon>
        <taxon>Peloderinae</taxon>
        <taxon>Caenorhabditis</taxon>
    </lineage>
</organism>
<sequence length="661" mass="74526">MQSFRKIWNKPRPDDWMPLARFYYADSALNDIASELDSFDGRRDPDRCNALVTRLRVAQDRVLHIITEMLIHLYPREQDRACRDFRVKFPDEILHDTLPGQLWFGAECLSAGSNIIDHETESDLIRPLAKDVTKQLDFLRDLLKNQSLRDPSAYNPVIKENLLKFDKLFAEFEYQYVSAMVPVKSVKEHDSQLDVAVLFSEVLSLALVKDLITQDLIDYCDPSVMIAIPRLGIVWGLLVYSNGALNVDVPAENLSEMFRPFYSLLVKIRNLLRILTPTELTKLETVLCKGESAVPEDTSSTLTMSDFRTNATDEEKAKNNQRVWMCDMPSDSTSSLDSSVQDSSSETTSLASSALASPHSGSEENVSQIENEEGDDEAIGTNSNSSNEVTESPETIEEPDNVDMEESSESEVDTHIDETRNESDDEITDDVQASDVLQVETKKCKSSRLLEQKKFDKSVKTIIPMQTDPRSQIDPKNLRSRFRSSEDLVHRLFVCIAGVADQLQTNYSSEIRKVLKLILQPSEIIPVYEVVNAQVANSQTEGEETGVEAQETLPLPAFMGVRWVPDEDCEQCTACSMPFNFVRRRHHCRNCGRIFCHKCSCNTISIPEHGYDRKVRVCNLCYVHRLNSFGCNEPMSQVNENGATVPSVTEQQSAQTASASS</sequence>
<name>LST2_CAEEL</name>
<keyword id="KW-0479">Metal-binding</keyword>
<keyword id="KW-1185">Reference proteome</keyword>
<keyword id="KW-0862">Zinc</keyword>
<keyword id="KW-0863">Zinc-finger</keyword>
<comment type="function">
    <text evidence="1 4">Negative regulator of epidermal growth factor receptor (EGFR) signaling.</text>
</comment>
<comment type="tissue specificity">
    <text evidence="4">Expressed in vulval precursor cells (VPCs).</text>
</comment>
<comment type="developmental stage">
    <text evidence="4">Highly expressed in all 6 vulval precursor cells (VPCs). At the time of inductive signaling, expression forms a gradient in response to inductive signal: expression is low in P6.p, intermediate in P5.p and P7.p and undiminished in P3.p, P4.p, and P8.p. Later, expression becomes strong again in P5.p and P7.p.</text>
</comment>
<comment type="disruption phenotype">
    <text evidence="4">Causes ectopic vulval induction.</text>
</comment>
<comment type="similarity">
    <text evidence="5">Belongs to the lst-2 family.</text>
</comment>
<evidence type="ECO:0000250" key="1"/>
<evidence type="ECO:0000255" key="2">
    <source>
        <dbReference type="PROSITE-ProRule" id="PRU00091"/>
    </source>
</evidence>
<evidence type="ECO:0000256" key="3">
    <source>
        <dbReference type="SAM" id="MobiDB-lite"/>
    </source>
</evidence>
<evidence type="ECO:0000269" key="4">
    <source>
    </source>
</evidence>
<evidence type="ECO:0000305" key="5"/>
<dbReference type="EMBL" id="FO081006">
    <property type="protein sequence ID" value="CCD68425.1"/>
    <property type="molecule type" value="Genomic_DNA"/>
</dbReference>
<dbReference type="PIR" id="T33568">
    <property type="entry name" value="T33568"/>
</dbReference>
<dbReference type="RefSeq" id="NP_508756.2">
    <property type="nucleotide sequence ID" value="NM_076355.6"/>
</dbReference>
<dbReference type="SMR" id="Q9TZD0"/>
<dbReference type="FunCoup" id="Q9TZD0">
    <property type="interactions" value="887"/>
</dbReference>
<dbReference type="STRING" id="6239.R160.7.1"/>
<dbReference type="PaxDb" id="6239-R160.7"/>
<dbReference type="PeptideAtlas" id="Q9TZD0"/>
<dbReference type="EnsemblMetazoa" id="R160.7.1">
    <property type="protein sequence ID" value="R160.7.1"/>
    <property type="gene ID" value="WBGene00003084"/>
</dbReference>
<dbReference type="GeneID" id="180712"/>
<dbReference type="KEGG" id="cel:CELE_R160.7"/>
<dbReference type="UCSC" id="R160.7">
    <property type="organism name" value="c. elegans"/>
</dbReference>
<dbReference type="AGR" id="WB:WBGene00003084"/>
<dbReference type="CTD" id="180712"/>
<dbReference type="WormBase" id="R160.7">
    <property type="protein sequence ID" value="CE33815"/>
    <property type="gene ID" value="WBGene00003084"/>
    <property type="gene designation" value="lst-2"/>
</dbReference>
<dbReference type="eggNOG" id="KOG1819">
    <property type="taxonomic scope" value="Eukaryota"/>
</dbReference>
<dbReference type="GeneTree" id="ENSGT00940000171484"/>
<dbReference type="HOGENOM" id="CLU_007360_1_1_1"/>
<dbReference type="InParanoid" id="Q9TZD0"/>
<dbReference type="OMA" id="NLSEMFR"/>
<dbReference type="OrthoDB" id="20035at2759"/>
<dbReference type="PhylomeDB" id="Q9TZD0"/>
<dbReference type="PRO" id="PR:Q9TZD0"/>
<dbReference type="Proteomes" id="UP000001940">
    <property type="component" value="Chromosome X"/>
</dbReference>
<dbReference type="Bgee" id="WBGene00003084">
    <property type="expression patterns" value="Expressed in germ line (C elegans) and 4 other cell types or tissues"/>
</dbReference>
<dbReference type="GO" id="GO:0031901">
    <property type="term" value="C:early endosome membrane"/>
    <property type="evidence" value="ECO:0000318"/>
    <property type="project" value="GO_Central"/>
</dbReference>
<dbReference type="GO" id="GO:0032266">
    <property type="term" value="F:phosphatidylinositol-3-phosphate binding"/>
    <property type="evidence" value="ECO:0000250"/>
    <property type="project" value="WormBase"/>
</dbReference>
<dbReference type="GO" id="GO:0008270">
    <property type="term" value="F:zinc ion binding"/>
    <property type="evidence" value="ECO:0007669"/>
    <property type="project" value="UniProtKB-KW"/>
</dbReference>
<dbReference type="GO" id="GO:0042059">
    <property type="term" value="P:negative regulation of epidermal growth factor receptor signaling pathway"/>
    <property type="evidence" value="ECO:0000318"/>
    <property type="project" value="GO_Central"/>
</dbReference>
<dbReference type="CDD" id="cd15731">
    <property type="entry name" value="FYVE_LST2"/>
    <property type="match status" value="1"/>
</dbReference>
<dbReference type="Gene3D" id="3.30.40.10">
    <property type="entry name" value="Zinc/RING finger domain, C3HC4 (zinc finger)"/>
    <property type="match status" value="1"/>
</dbReference>
<dbReference type="InterPro" id="IPR043269">
    <property type="entry name" value="FYVE_LST2"/>
</dbReference>
<dbReference type="InterPro" id="IPR051118">
    <property type="entry name" value="LST-2"/>
</dbReference>
<dbReference type="InterPro" id="IPR000306">
    <property type="entry name" value="Znf_FYVE"/>
</dbReference>
<dbReference type="InterPro" id="IPR017455">
    <property type="entry name" value="Znf_FYVE-rel"/>
</dbReference>
<dbReference type="InterPro" id="IPR011011">
    <property type="entry name" value="Znf_FYVE_PHD"/>
</dbReference>
<dbReference type="InterPro" id="IPR013083">
    <property type="entry name" value="Znf_RING/FYVE/PHD"/>
</dbReference>
<dbReference type="PANTHER" id="PTHR46465">
    <property type="entry name" value="LATERAL SIGNALING TARGET PROTEIN 2 HOMOLOG"/>
    <property type="match status" value="1"/>
</dbReference>
<dbReference type="PANTHER" id="PTHR46465:SF2">
    <property type="entry name" value="LATERAL SIGNALING TARGET PROTEIN 2 HOMOLOG"/>
    <property type="match status" value="1"/>
</dbReference>
<dbReference type="Pfam" id="PF01363">
    <property type="entry name" value="FYVE"/>
    <property type="match status" value="1"/>
</dbReference>
<dbReference type="SMART" id="SM00064">
    <property type="entry name" value="FYVE"/>
    <property type="match status" value="1"/>
</dbReference>
<dbReference type="SUPFAM" id="SSF57903">
    <property type="entry name" value="FYVE/PHD zinc finger"/>
    <property type="match status" value="1"/>
</dbReference>
<dbReference type="PROSITE" id="PS50178">
    <property type="entry name" value="ZF_FYVE"/>
    <property type="match status" value="1"/>
</dbReference>
<protein>
    <recommendedName>
        <fullName>Lateral signaling target protein 2</fullName>
    </recommendedName>
</protein>
<proteinExistence type="evidence at transcript level"/>